<sequence>MHFQDVILTLQNFWAKRGCVIMQPIDVECGAGTFNPSTFLRVIGPEPWNVAYVEPSRRPTDGRYGENPNRLQHYFQFQVILKPSPDNVQDIYLDSLRALGIDPAAHDIRFVEDDWESPTLGAWGLGWEVWLNGMEVTQFTYFQQVGGIDLAPTSVEITYGLERLCMYLQGKESVYDLSWNDRVTYGNIYHQNEVEQSKYNFEASNPKMLLDQFNACEAECKRLCDEGLLWPAYDYCLKCSHTFNLLDARGAISITERTGYIGRVRALASAVARLYAVQREELGYPMLASAR</sequence>
<organism>
    <name type="scientific">Nitratidesulfovibrio vulgaris (strain DSM 19637 / Miyazaki F)</name>
    <name type="common">Desulfovibrio vulgaris</name>
    <dbReference type="NCBI Taxonomy" id="883"/>
    <lineage>
        <taxon>Bacteria</taxon>
        <taxon>Pseudomonadati</taxon>
        <taxon>Thermodesulfobacteriota</taxon>
        <taxon>Desulfovibrionia</taxon>
        <taxon>Desulfovibrionales</taxon>
        <taxon>Desulfovibrionaceae</taxon>
        <taxon>Nitratidesulfovibrio</taxon>
    </lineage>
</organism>
<name>SYGA_NITV9</name>
<proteinExistence type="inferred from homology"/>
<evidence type="ECO:0000255" key="1">
    <source>
        <dbReference type="HAMAP-Rule" id="MF_00254"/>
    </source>
</evidence>
<protein>
    <recommendedName>
        <fullName evidence="1">Glycine--tRNA ligase alpha subunit</fullName>
        <ecNumber evidence="1">6.1.1.14</ecNumber>
    </recommendedName>
    <alternativeName>
        <fullName evidence="1">Glycyl-tRNA synthetase alpha subunit</fullName>
        <shortName evidence="1">GlyRS</shortName>
    </alternativeName>
</protein>
<gene>
    <name evidence="1" type="primary">glyQ</name>
    <name type="ordered locus">DvMF_0290</name>
</gene>
<accession>B8DPG0</accession>
<dbReference type="EC" id="6.1.1.14" evidence="1"/>
<dbReference type="EMBL" id="CP001197">
    <property type="protein sequence ID" value="ACL07247.1"/>
    <property type="molecule type" value="Genomic_DNA"/>
</dbReference>
<dbReference type="SMR" id="B8DPG0"/>
<dbReference type="STRING" id="883.DvMF_0290"/>
<dbReference type="KEGG" id="dvm:DvMF_0290"/>
<dbReference type="eggNOG" id="COG0752">
    <property type="taxonomic scope" value="Bacteria"/>
</dbReference>
<dbReference type="HOGENOM" id="CLU_057066_1_0_7"/>
<dbReference type="OrthoDB" id="9802183at2"/>
<dbReference type="GO" id="GO:0005829">
    <property type="term" value="C:cytosol"/>
    <property type="evidence" value="ECO:0007669"/>
    <property type="project" value="TreeGrafter"/>
</dbReference>
<dbReference type="GO" id="GO:0005524">
    <property type="term" value="F:ATP binding"/>
    <property type="evidence" value="ECO:0007669"/>
    <property type="project" value="UniProtKB-UniRule"/>
</dbReference>
<dbReference type="GO" id="GO:0004820">
    <property type="term" value="F:glycine-tRNA ligase activity"/>
    <property type="evidence" value="ECO:0007669"/>
    <property type="project" value="UniProtKB-UniRule"/>
</dbReference>
<dbReference type="GO" id="GO:0006426">
    <property type="term" value="P:glycyl-tRNA aminoacylation"/>
    <property type="evidence" value="ECO:0007669"/>
    <property type="project" value="UniProtKB-UniRule"/>
</dbReference>
<dbReference type="CDD" id="cd00733">
    <property type="entry name" value="GlyRS_alpha_core"/>
    <property type="match status" value="1"/>
</dbReference>
<dbReference type="FunFam" id="3.30.930.10:FF:000006">
    <property type="entry name" value="Glycine--tRNA ligase alpha subunit"/>
    <property type="match status" value="1"/>
</dbReference>
<dbReference type="Gene3D" id="3.30.930.10">
    <property type="entry name" value="Bira Bifunctional Protein, Domain 2"/>
    <property type="match status" value="1"/>
</dbReference>
<dbReference type="Gene3D" id="1.20.58.180">
    <property type="entry name" value="Class II aaRS and biotin synthetases, domain 2"/>
    <property type="match status" value="1"/>
</dbReference>
<dbReference type="HAMAP" id="MF_00254">
    <property type="entry name" value="Gly_tRNA_synth_alpha"/>
    <property type="match status" value="1"/>
</dbReference>
<dbReference type="InterPro" id="IPR045864">
    <property type="entry name" value="aa-tRNA-synth_II/BPL/LPL"/>
</dbReference>
<dbReference type="InterPro" id="IPR006194">
    <property type="entry name" value="Gly-tRNA-synth_heterodimer"/>
</dbReference>
<dbReference type="InterPro" id="IPR002310">
    <property type="entry name" value="Gly-tRNA_ligase_asu"/>
</dbReference>
<dbReference type="NCBIfam" id="TIGR00388">
    <property type="entry name" value="glyQ"/>
    <property type="match status" value="1"/>
</dbReference>
<dbReference type="NCBIfam" id="NF006827">
    <property type="entry name" value="PRK09348.1"/>
    <property type="match status" value="1"/>
</dbReference>
<dbReference type="PANTHER" id="PTHR30075:SF2">
    <property type="entry name" value="GLYCINE--TRNA LIGASE, CHLOROPLASTIC_MITOCHONDRIAL 2"/>
    <property type="match status" value="1"/>
</dbReference>
<dbReference type="PANTHER" id="PTHR30075">
    <property type="entry name" value="GLYCYL-TRNA SYNTHETASE"/>
    <property type="match status" value="1"/>
</dbReference>
<dbReference type="Pfam" id="PF02091">
    <property type="entry name" value="tRNA-synt_2e"/>
    <property type="match status" value="1"/>
</dbReference>
<dbReference type="PRINTS" id="PR01044">
    <property type="entry name" value="TRNASYNTHGA"/>
</dbReference>
<dbReference type="SUPFAM" id="SSF55681">
    <property type="entry name" value="Class II aaRS and biotin synthetases"/>
    <property type="match status" value="1"/>
</dbReference>
<dbReference type="PROSITE" id="PS50861">
    <property type="entry name" value="AA_TRNA_LIGASE_II_GLYAB"/>
    <property type="match status" value="1"/>
</dbReference>
<reference key="1">
    <citation type="submission" date="2008-10" db="EMBL/GenBank/DDBJ databases">
        <title>Complete sequence of Desulfovibrio vulgaris str. 'Miyazaki F'.</title>
        <authorList>
            <person name="Lucas S."/>
            <person name="Copeland A."/>
            <person name="Lapidus A."/>
            <person name="Glavina del Rio T."/>
            <person name="Dalin E."/>
            <person name="Tice H."/>
            <person name="Bruce D."/>
            <person name="Goodwin L."/>
            <person name="Pitluck S."/>
            <person name="Sims D."/>
            <person name="Brettin T."/>
            <person name="Detter J.C."/>
            <person name="Han C."/>
            <person name="Larimer F."/>
            <person name="Land M."/>
            <person name="Hauser L."/>
            <person name="Kyrpides N."/>
            <person name="Mikhailova N."/>
            <person name="Hazen T.C."/>
            <person name="Richardson P."/>
        </authorList>
    </citation>
    <scope>NUCLEOTIDE SEQUENCE [LARGE SCALE GENOMIC DNA]</scope>
    <source>
        <strain>DSM 19637 / Miyazaki F</strain>
    </source>
</reference>
<keyword id="KW-0030">Aminoacyl-tRNA synthetase</keyword>
<keyword id="KW-0067">ATP-binding</keyword>
<keyword id="KW-0963">Cytoplasm</keyword>
<keyword id="KW-0436">Ligase</keyword>
<keyword id="KW-0547">Nucleotide-binding</keyword>
<keyword id="KW-0648">Protein biosynthesis</keyword>
<feature type="chain" id="PRO_1000197180" description="Glycine--tRNA ligase alpha subunit">
    <location>
        <begin position="1"/>
        <end position="291"/>
    </location>
</feature>
<comment type="catalytic activity">
    <reaction evidence="1">
        <text>tRNA(Gly) + glycine + ATP = glycyl-tRNA(Gly) + AMP + diphosphate</text>
        <dbReference type="Rhea" id="RHEA:16013"/>
        <dbReference type="Rhea" id="RHEA-COMP:9664"/>
        <dbReference type="Rhea" id="RHEA-COMP:9683"/>
        <dbReference type="ChEBI" id="CHEBI:30616"/>
        <dbReference type="ChEBI" id="CHEBI:33019"/>
        <dbReference type="ChEBI" id="CHEBI:57305"/>
        <dbReference type="ChEBI" id="CHEBI:78442"/>
        <dbReference type="ChEBI" id="CHEBI:78522"/>
        <dbReference type="ChEBI" id="CHEBI:456215"/>
        <dbReference type="EC" id="6.1.1.14"/>
    </reaction>
</comment>
<comment type="subunit">
    <text evidence="1">Tetramer of two alpha and two beta subunits.</text>
</comment>
<comment type="subcellular location">
    <subcellularLocation>
        <location evidence="1">Cytoplasm</location>
    </subcellularLocation>
</comment>
<comment type="similarity">
    <text evidence="1">Belongs to the class-II aminoacyl-tRNA synthetase family.</text>
</comment>